<feature type="chain" id="PRO_0000192075" description="Bifunctional purine biosynthesis protein PurH">
    <location>
        <begin position="1"/>
        <end position="538"/>
    </location>
</feature>
<feature type="domain" description="MGS-like" evidence="2">
    <location>
        <begin position="6"/>
        <end position="158"/>
    </location>
</feature>
<organism>
    <name type="scientific">Brucella suis biovar 1 (strain 1330)</name>
    <dbReference type="NCBI Taxonomy" id="204722"/>
    <lineage>
        <taxon>Bacteria</taxon>
        <taxon>Pseudomonadati</taxon>
        <taxon>Pseudomonadota</taxon>
        <taxon>Alphaproteobacteria</taxon>
        <taxon>Hyphomicrobiales</taxon>
        <taxon>Brucellaceae</taxon>
        <taxon>Brucella/Ochrobactrum group</taxon>
        <taxon>Brucella</taxon>
    </lineage>
</organism>
<protein>
    <recommendedName>
        <fullName evidence="1">Bifunctional purine biosynthesis protein PurH</fullName>
    </recommendedName>
    <domain>
        <recommendedName>
            <fullName evidence="1">Phosphoribosylaminoimidazolecarboxamide formyltransferase</fullName>
            <ecNumber evidence="1">2.1.2.3</ecNumber>
        </recommendedName>
        <alternativeName>
            <fullName evidence="1">AICAR transformylase</fullName>
        </alternativeName>
    </domain>
    <domain>
        <recommendedName>
            <fullName evidence="1">IMP cyclohydrolase</fullName>
            <ecNumber evidence="1">3.5.4.10</ecNumber>
        </recommendedName>
        <alternativeName>
            <fullName evidence="1">ATIC</fullName>
        </alternativeName>
        <alternativeName>
            <fullName evidence="1">IMP synthase</fullName>
        </alternativeName>
        <alternativeName>
            <fullName evidence="1">Inosinicase</fullName>
        </alternativeName>
    </domain>
</protein>
<reference key="1">
    <citation type="journal article" date="2002" name="Proc. Natl. Acad. Sci. U.S.A.">
        <title>The Brucella suis genome reveals fundamental similarities between animal and plant pathogens and symbionts.</title>
        <authorList>
            <person name="Paulsen I.T."/>
            <person name="Seshadri R."/>
            <person name="Nelson K.E."/>
            <person name="Eisen J.A."/>
            <person name="Heidelberg J.F."/>
            <person name="Read T.D."/>
            <person name="Dodson R.J."/>
            <person name="Umayam L.A."/>
            <person name="Brinkac L.M."/>
            <person name="Beanan M.J."/>
            <person name="Daugherty S.C."/>
            <person name="DeBoy R.T."/>
            <person name="Durkin A.S."/>
            <person name="Kolonay J.F."/>
            <person name="Madupu R."/>
            <person name="Nelson W.C."/>
            <person name="Ayodeji B."/>
            <person name="Kraul M."/>
            <person name="Shetty J."/>
            <person name="Malek J.A."/>
            <person name="Van Aken S.E."/>
            <person name="Riedmuller S."/>
            <person name="Tettelin H."/>
            <person name="Gill S.R."/>
            <person name="White O."/>
            <person name="Salzberg S.L."/>
            <person name="Hoover D.L."/>
            <person name="Lindler L.E."/>
            <person name="Halling S.M."/>
            <person name="Boyle S.M."/>
            <person name="Fraser C.M."/>
        </authorList>
    </citation>
    <scope>NUCLEOTIDE SEQUENCE [LARGE SCALE GENOMIC DNA]</scope>
    <source>
        <strain>1330</strain>
    </source>
</reference>
<reference key="2">
    <citation type="journal article" date="2011" name="J. Bacteriol.">
        <title>Revised genome sequence of Brucella suis 1330.</title>
        <authorList>
            <person name="Tae H."/>
            <person name="Shallom S."/>
            <person name="Settlage R."/>
            <person name="Preston D."/>
            <person name="Adams L.G."/>
            <person name="Garner H.R."/>
        </authorList>
    </citation>
    <scope>NUCLEOTIDE SEQUENCE [LARGE SCALE GENOMIC DNA]</scope>
    <source>
        <strain>1330</strain>
    </source>
</reference>
<proteinExistence type="inferred from homology"/>
<name>PUR9_BRUSU</name>
<sequence>MAVSSKHIPAPDLHRVRRALLSVSDKTGLIDFAKALHANGVEILSTGGTAKSIAAAGIPVKDVSEITGFPEIMDGRVKTLHPAVHGGLLAVRNDPEHVAAMEEHGIGGIDLAVINLYPFEEVRFKGGDYDTTVENIDIGGPAMIRASAKNHAYVATVVDPADYADVVAELEKHSGSLPLAFRKKLAAKAFSRTAAYDAAISNWFAEAIDEETPTYRAVAGKLHSVMRYGENPHQTAGFYLTGEKRPGVATATQLQGKQLSYNNINDTDAAFELVAEFDPARTAAVAIIKHANPCGVAEASTIKEAYLKALACDPVSAFGGIVALNRTLDEEAAEEIVKTFTEVIIAPDATEGAQAIVAAKKNLRLLVTGGLPDPRAKGIAAKTVAGGLLVQSRDNGVVDDLDLKVVTKRAPTEAELNDLKFAFRVGKHVKSNAIVYVKDGATVGIGAGQMSRVDSARIAARKAEDAAEAAGLAAPLTKGCVVASDAFFPFADGLLSAVEAGATAVIQPGGSMRDDEVIAAADEHGIAMVMTGMRHFRH</sequence>
<comment type="catalytic activity">
    <reaction evidence="1">
        <text>(6R)-10-formyltetrahydrofolate + 5-amino-1-(5-phospho-beta-D-ribosyl)imidazole-4-carboxamide = 5-formamido-1-(5-phospho-D-ribosyl)imidazole-4-carboxamide + (6S)-5,6,7,8-tetrahydrofolate</text>
        <dbReference type="Rhea" id="RHEA:22192"/>
        <dbReference type="ChEBI" id="CHEBI:57453"/>
        <dbReference type="ChEBI" id="CHEBI:58467"/>
        <dbReference type="ChEBI" id="CHEBI:58475"/>
        <dbReference type="ChEBI" id="CHEBI:195366"/>
        <dbReference type="EC" id="2.1.2.3"/>
    </reaction>
</comment>
<comment type="catalytic activity">
    <reaction evidence="1">
        <text>IMP + H2O = 5-formamido-1-(5-phospho-D-ribosyl)imidazole-4-carboxamide</text>
        <dbReference type="Rhea" id="RHEA:18445"/>
        <dbReference type="ChEBI" id="CHEBI:15377"/>
        <dbReference type="ChEBI" id="CHEBI:58053"/>
        <dbReference type="ChEBI" id="CHEBI:58467"/>
        <dbReference type="EC" id="3.5.4.10"/>
    </reaction>
</comment>
<comment type="pathway">
    <text evidence="1">Purine metabolism; IMP biosynthesis via de novo pathway; 5-formamido-1-(5-phospho-D-ribosyl)imidazole-4-carboxamide from 5-amino-1-(5-phospho-D-ribosyl)imidazole-4-carboxamide (10-formyl THF route): step 1/1.</text>
</comment>
<comment type="pathway">
    <text evidence="1">Purine metabolism; IMP biosynthesis via de novo pathway; IMP from 5-formamido-1-(5-phospho-D-ribosyl)imidazole-4-carboxamide: step 1/1.</text>
</comment>
<comment type="domain">
    <text evidence="1">The IMP cyclohydrolase activity resides in the N-terminal region.</text>
</comment>
<comment type="similarity">
    <text evidence="1">Belongs to the PurH family.</text>
</comment>
<dbReference type="EC" id="2.1.2.3" evidence="1"/>
<dbReference type="EC" id="3.5.4.10" evidence="1"/>
<dbReference type="EMBL" id="AE014291">
    <property type="protein sequence ID" value="AAN30711.1"/>
    <property type="molecule type" value="Genomic_DNA"/>
</dbReference>
<dbReference type="EMBL" id="CP002997">
    <property type="protein sequence ID" value="AEM19128.1"/>
    <property type="molecule type" value="Genomic_DNA"/>
</dbReference>
<dbReference type="RefSeq" id="WP_004684287.1">
    <property type="nucleotide sequence ID" value="NZ_KN046804.1"/>
</dbReference>
<dbReference type="SMR" id="P67540"/>
<dbReference type="GeneID" id="97533059"/>
<dbReference type="KEGG" id="bms:BR1816"/>
<dbReference type="KEGG" id="bsi:BS1330_I1810"/>
<dbReference type="PATRIC" id="fig|204722.21.peg.1161"/>
<dbReference type="HOGENOM" id="CLU_016316_5_2_5"/>
<dbReference type="PhylomeDB" id="P67540"/>
<dbReference type="UniPathway" id="UPA00074">
    <property type="reaction ID" value="UER00133"/>
</dbReference>
<dbReference type="UniPathway" id="UPA00074">
    <property type="reaction ID" value="UER00135"/>
</dbReference>
<dbReference type="PRO" id="PR:P67540"/>
<dbReference type="Proteomes" id="UP000007104">
    <property type="component" value="Chromosome I"/>
</dbReference>
<dbReference type="GO" id="GO:0005829">
    <property type="term" value="C:cytosol"/>
    <property type="evidence" value="ECO:0007669"/>
    <property type="project" value="TreeGrafter"/>
</dbReference>
<dbReference type="GO" id="GO:0003937">
    <property type="term" value="F:IMP cyclohydrolase activity"/>
    <property type="evidence" value="ECO:0007669"/>
    <property type="project" value="UniProtKB-UniRule"/>
</dbReference>
<dbReference type="GO" id="GO:0004643">
    <property type="term" value="F:phosphoribosylaminoimidazolecarboxamide formyltransferase activity"/>
    <property type="evidence" value="ECO:0007669"/>
    <property type="project" value="UniProtKB-UniRule"/>
</dbReference>
<dbReference type="GO" id="GO:0006189">
    <property type="term" value="P:'de novo' IMP biosynthetic process"/>
    <property type="evidence" value="ECO:0007669"/>
    <property type="project" value="UniProtKB-UniRule"/>
</dbReference>
<dbReference type="CDD" id="cd01421">
    <property type="entry name" value="IMPCH"/>
    <property type="match status" value="1"/>
</dbReference>
<dbReference type="FunFam" id="3.40.140.20:FF:000001">
    <property type="entry name" value="Bifunctional purine biosynthesis protein PurH"/>
    <property type="match status" value="1"/>
</dbReference>
<dbReference type="FunFam" id="3.40.140.20:FF:000002">
    <property type="entry name" value="Bifunctional purine biosynthesis protein PurH"/>
    <property type="match status" value="1"/>
</dbReference>
<dbReference type="FunFam" id="3.40.50.1380:FF:000001">
    <property type="entry name" value="Bifunctional purine biosynthesis protein PurH"/>
    <property type="match status" value="1"/>
</dbReference>
<dbReference type="Gene3D" id="3.40.140.20">
    <property type="match status" value="2"/>
</dbReference>
<dbReference type="Gene3D" id="3.40.50.1380">
    <property type="entry name" value="Methylglyoxal synthase-like domain"/>
    <property type="match status" value="1"/>
</dbReference>
<dbReference type="HAMAP" id="MF_00139">
    <property type="entry name" value="PurH"/>
    <property type="match status" value="1"/>
</dbReference>
<dbReference type="InterPro" id="IPR024051">
    <property type="entry name" value="AICAR_Tfase_dup_dom_sf"/>
</dbReference>
<dbReference type="InterPro" id="IPR016193">
    <property type="entry name" value="Cytidine_deaminase-like"/>
</dbReference>
<dbReference type="InterPro" id="IPR011607">
    <property type="entry name" value="MGS-like_dom"/>
</dbReference>
<dbReference type="InterPro" id="IPR036914">
    <property type="entry name" value="MGS-like_dom_sf"/>
</dbReference>
<dbReference type="InterPro" id="IPR002695">
    <property type="entry name" value="PurH-like"/>
</dbReference>
<dbReference type="NCBIfam" id="NF002049">
    <property type="entry name" value="PRK00881.1"/>
    <property type="match status" value="1"/>
</dbReference>
<dbReference type="NCBIfam" id="TIGR00355">
    <property type="entry name" value="purH"/>
    <property type="match status" value="1"/>
</dbReference>
<dbReference type="PANTHER" id="PTHR11692:SF0">
    <property type="entry name" value="BIFUNCTIONAL PURINE BIOSYNTHESIS PROTEIN ATIC"/>
    <property type="match status" value="1"/>
</dbReference>
<dbReference type="PANTHER" id="PTHR11692">
    <property type="entry name" value="BIFUNCTIONAL PURINE BIOSYNTHESIS PROTEIN PURH"/>
    <property type="match status" value="1"/>
</dbReference>
<dbReference type="Pfam" id="PF01808">
    <property type="entry name" value="AICARFT_IMPCHas"/>
    <property type="match status" value="1"/>
</dbReference>
<dbReference type="Pfam" id="PF02142">
    <property type="entry name" value="MGS"/>
    <property type="match status" value="1"/>
</dbReference>
<dbReference type="PIRSF" id="PIRSF000414">
    <property type="entry name" value="AICARFT_IMPCHas"/>
    <property type="match status" value="1"/>
</dbReference>
<dbReference type="SMART" id="SM00798">
    <property type="entry name" value="AICARFT_IMPCHas"/>
    <property type="match status" value="1"/>
</dbReference>
<dbReference type="SMART" id="SM00851">
    <property type="entry name" value="MGS"/>
    <property type="match status" value="1"/>
</dbReference>
<dbReference type="SUPFAM" id="SSF53927">
    <property type="entry name" value="Cytidine deaminase-like"/>
    <property type="match status" value="1"/>
</dbReference>
<dbReference type="SUPFAM" id="SSF52335">
    <property type="entry name" value="Methylglyoxal synthase-like"/>
    <property type="match status" value="1"/>
</dbReference>
<dbReference type="PROSITE" id="PS51855">
    <property type="entry name" value="MGS"/>
    <property type="match status" value="1"/>
</dbReference>
<accession>P67540</accession>
<accession>G0K7F2</accession>
<accession>Q8FYP8</accession>
<accession>Q8YJ53</accession>
<evidence type="ECO:0000255" key="1">
    <source>
        <dbReference type="HAMAP-Rule" id="MF_00139"/>
    </source>
</evidence>
<evidence type="ECO:0000255" key="2">
    <source>
        <dbReference type="PROSITE-ProRule" id="PRU01202"/>
    </source>
</evidence>
<keyword id="KW-0378">Hydrolase</keyword>
<keyword id="KW-0511">Multifunctional enzyme</keyword>
<keyword id="KW-0658">Purine biosynthesis</keyword>
<keyword id="KW-0808">Transferase</keyword>
<gene>
    <name evidence="1" type="primary">purH</name>
    <name type="ordered locus">BR1816</name>
    <name type="ordered locus">BS1330_I1810</name>
</gene>